<reference key="1">
    <citation type="submission" date="2008-02" db="EMBL/GenBank/DDBJ databases">
        <title>Complete sequence of Haemophilus somnus 2336.</title>
        <authorList>
            <consortium name="US DOE Joint Genome Institute"/>
            <person name="Siddaramappa S."/>
            <person name="Duncan A.J."/>
            <person name="Challacombe J.F."/>
            <person name="Rainey D."/>
            <person name="Gillaspy A.F."/>
            <person name="Carson M."/>
            <person name="Gipson J."/>
            <person name="Gipson M."/>
            <person name="Bruce D."/>
            <person name="Detter J.C."/>
            <person name="Han C.S."/>
            <person name="Land M."/>
            <person name="Tapia R."/>
            <person name="Thompson L.S."/>
            <person name="Orvis J."/>
            <person name="Zaitshik J."/>
            <person name="Barnes G."/>
            <person name="Brettin T.S."/>
            <person name="Dyer D.W."/>
            <person name="Inzana T.J."/>
        </authorList>
    </citation>
    <scope>NUCLEOTIDE SEQUENCE [LARGE SCALE GENOMIC DNA]</scope>
    <source>
        <strain>2336</strain>
    </source>
</reference>
<feature type="chain" id="PRO_1000133364" description="Anaerobic glycerol-3-phosphate dehydrogenase subunit B">
    <location>
        <begin position="1"/>
        <end position="434"/>
    </location>
</feature>
<dbReference type="EC" id="1.1.5.3" evidence="1"/>
<dbReference type="EMBL" id="CP000947">
    <property type="protein sequence ID" value="ACA31538.1"/>
    <property type="molecule type" value="Genomic_DNA"/>
</dbReference>
<dbReference type="STRING" id="228400.HSM_1758"/>
<dbReference type="KEGG" id="hsm:HSM_1758"/>
<dbReference type="HOGENOM" id="CLU_047793_0_0_6"/>
<dbReference type="UniPathway" id="UPA00618">
    <property type="reaction ID" value="UER00673"/>
</dbReference>
<dbReference type="GO" id="GO:0009331">
    <property type="term" value="C:glycerol-3-phosphate dehydrogenase (FAD) complex"/>
    <property type="evidence" value="ECO:0007669"/>
    <property type="project" value="InterPro"/>
</dbReference>
<dbReference type="GO" id="GO:0004368">
    <property type="term" value="F:glycerol-3-phosphate dehydrogenase (quinone) activity"/>
    <property type="evidence" value="ECO:0007669"/>
    <property type="project" value="UniProtKB-UniRule"/>
</dbReference>
<dbReference type="GO" id="GO:0019563">
    <property type="term" value="P:glycerol catabolic process"/>
    <property type="evidence" value="ECO:0007669"/>
    <property type="project" value="UniProtKB-UniRule"/>
</dbReference>
<dbReference type="Gene3D" id="3.50.50.60">
    <property type="entry name" value="FAD/NAD(P)-binding domain"/>
    <property type="match status" value="2"/>
</dbReference>
<dbReference type="HAMAP" id="MF_00753">
    <property type="entry name" value="Glycerol3P_GlpB"/>
    <property type="match status" value="1"/>
</dbReference>
<dbReference type="InterPro" id="IPR003953">
    <property type="entry name" value="FAD-dep_OxRdtase_2_FAD-bd"/>
</dbReference>
<dbReference type="InterPro" id="IPR050315">
    <property type="entry name" value="FAD-oxidoreductase_2"/>
</dbReference>
<dbReference type="InterPro" id="IPR036188">
    <property type="entry name" value="FAD/NAD-bd_sf"/>
</dbReference>
<dbReference type="InterPro" id="IPR009158">
    <property type="entry name" value="G3P_DH_GlpB_su"/>
</dbReference>
<dbReference type="NCBIfam" id="TIGR03378">
    <property type="entry name" value="glycerol3P_GlpB"/>
    <property type="match status" value="1"/>
</dbReference>
<dbReference type="NCBIfam" id="NF003718">
    <property type="entry name" value="PRK05329.1-1"/>
    <property type="match status" value="1"/>
</dbReference>
<dbReference type="NCBIfam" id="NF003719">
    <property type="entry name" value="PRK05329.1-2"/>
    <property type="match status" value="1"/>
</dbReference>
<dbReference type="NCBIfam" id="NF003720">
    <property type="entry name" value="PRK05329.1-3"/>
    <property type="match status" value="1"/>
</dbReference>
<dbReference type="NCBIfam" id="NF003721">
    <property type="entry name" value="PRK05329.1-4"/>
    <property type="match status" value="1"/>
</dbReference>
<dbReference type="PANTHER" id="PTHR43400:SF11">
    <property type="entry name" value="ANAEROBIC GLYCEROL-3-PHOSPHATE DEHYDROGENASE SUBUNIT B"/>
    <property type="match status" value="1"/>
</dbReference>
<dbReference type="PANTHER" id="PTHR43400">
    <property type="entry name" value="FUMARATE REDUCTASE"/>
    <property type="match status" value="1"/>
</dbReference>
<dbReference type="Pfam" id="PF00890">
    <property type="entry name" value="FAD_binding_2"/>
    <property type="match status" value="1"/>
</dbReference>
<dbReference type="PIRSF" id="PIRSF000141">
    <property type="entry name" value="Anaerobic_G3P_dh"/>
    <property type="match status" value="1"/>
</dbReference>
<dbReference type="SUPFAM" id="SSF51905">
    <property type="entry name" value="FAD/NAD(P)-binding domain"/>
    <property type="match status" value="1"/>
</dbReference>
<accession>B0UVX7</accession>
<protein>
    <recommendedName>
        <fullName evidence="1">Anaerobic glycerol-3-phosphate dehydrogenase subunit B</fullName>
        <shortName evidence="1">Anaerobic G-3-P dehydrogenase subunit B</shortName>
        <shortName evidence="1">Anaerobic G3Pdhase B</shortName>
        <ecNumber evidence="1">1.1.5.3</ecNumber>
    </recommendedName>
</protein>
<gene>
    <name evidence="1" type="primary">glpB</name>
    <name type="ordered locus">HSM_1758</name>
</gene>
<organism>
    <name type="scientific">Histophilus somni (strain 2336)</name>
    <name type="common">Haemophilus somnus</name>
    <dbReference type="NCBI Taxonomy" id="228400"/>
    <lineage>
        <taxon>Bacteria</taxon>
        <taxon>Pseudomonadati</taxon>
        <taxon>Pseudomonadota</taxon>
        <taxon>Gammaproteobacteria</taxon>
        <taxon>Pasteurellales</taxon>
        <taxon>Pasteurellaceae</taxon>
        <taxon>Histophilus</taxon>
    </lineage>
</organism>
<comment type="function">
    <text evidence="1">Conversion of glycerol 3-phosphate to dihydroxyacetone. Uses fumarate or nitrate as electron acceptor.</text>
</comment>
<comment type="catalytic activity">
    <reaction evidence="1">
        <text>a quinone + sn-glycerol 3-phosphate = dihydroxyacetone phosphate + a quinol</text>
        <dbReference type="Rhea" id="RHEA:18977"/>
        <dbReference type="ChEBI" id="CHEBI:24646"/>
        <dbReference type="ChEBI" id="CHEBI:57597"/>
        <dbReference type="ChEBI" id="CHEBI:57642"/>
        <dbReference type="ChEBI" id="CHEBI:132124"/>
        <dbReference type="EC" id="1.1.5.3"/>
    </reaction>
</comment>
<comment type="cofactor">
    <cofactor evidence="1">
        <name>FMN</name>
        <dbReference type="ChEBI" id="CHEBI:58210"/>
    </cofactor>
</comment>
<comment type="pathway">
    <text evidence="1">Polyol metabolism; glycerol degradation via glycerol kinase pathway; glycerone phosphate from sn-glycerol 3-phosphate (anaerobic route): step 1/1.</text>
</comment>
<comment type="subunit">
    <text evidence="1">Composed of a catalytic GlpA/B dimer and of membrane bound GlpC.</text>
</comment>
<comment type="similarity">
    <text evidence="1">Belongs to the anaerobic G-3-P dehydrogenase subunit B family.</text>
</comment>
<proteinExistence type="inferred from homology"/>
<keyword id="KW-0285">Flavoprotein</keyword>
<keyword id="KW-0288">FMN</keyword>
<keyword id="KW-0560">Oxidoreductase</keyword>
<evidence type="ECO:0000255" key="1">
    <source>
        <dbReference type="HAMAP-Rule" id="MF_00753"/>
    </source>
</evidence>
<name>GLPB_HISS2</name>
<sequence length="434" mass="48305">MAMKFDVVIIGGGLAGLTCGIMLQQKGKCCAIINNGQSAMNFSSGSMDLLSQLPNGEKINSFEQGYDSLEEQLPNHPYCLFGKQHVLQKAKQFEQLIEKINLNVTGSYKQNHFRVTPLGGLHRTWLSADCIPTMDLHDEHFGYQKITVLGIEGYHDFQPHLLAENLIQHPQFTHCSITTALLHLPELDQLRLTSREFRSVNISQLLEHRLAFRELVQEIKQASGDGEAIFLPACFGLDNQDFFNKLTLETGLNLYELPTLPPSLVGLRQHKKLKTYFEKLGGFILNGDKALRAVIEDQQVKQIYTQLHQEHGIFAEHFVLASGSFFSNGLVSVFDRLLEPIFDVDMIGNSMIDIQNRLTWTARRFSSPQPYQSAGVAINSRCQLKKSGQIIKNLYAAGNVIGGYNALELGCGSGVAVVTALTAADNIIEAQNRV</sequence>